<gene>
    <name evidence="1" type="primary">glmU</name>
    <name type="ordered locus">Rpal_2933</name>
</gene>
<feature type="chain" id="PRO_1000186479" description="Bifunctional protein GlmU">
    <location>
        <begin position="1"/>
        <end position="452"/>
    </location>
</feature>
<feature type="region of interest" description="Pyrophosphorylase" evidence="1">
    <location>
        <begin position="1"/>
        <end position="232"/>
    </location>
</feature>
<feature type="region of interest" description="Linker" evidence="1">
    <location>
        <begin position="233"/>
        <end position="253"/>
    </location>
</feature>
<feature type="region of interest" description="N-acetyltransferase" evidence="1">
    <location>
        <begin position="254"/>
        <end position="452"/>
    </location>
</feature>
<feature type="active site" description="Proton acceptor" evidence="1">
    <location>
        <position position="349"/>
    </location>
</feature>
<feature type="binding site" evidence="1">
    <location>
        <begin position="11"/>
        <end position="14"/>
    </location>
    <ligand>
        <name>UDP-N-acetyl-alpha-D-glucosamine</name>
        <dbReference type="ChEBI" id="CHEBI:57705"/>
    </ligand>
</feature>
<feature type="binding site" evidence="1">
    <location>
        <position position="25"/>
    </location>
    <ligand>
        <name>UDP-N-acetyl-alpha-D-glucosamine</name>
        <dbReference type="ChEBI" id="CHEBI:57705"/>
    </ligand>
</feature>
<feature type="binding site" evidence="1">
    <location>
        <position position="78"/>
    </location>
    <ligand>
        <name>UDP-N-acetyl-alpha-D-glucosamine</name>
        <dbReference type="ChEBI" id="CHEBI:57705"/>
    </ligand>
</feature>
<feature type="binding site" evidence="1">
    <location>
        <begin position="83"/>
        <end position="84"/>
    </location>
    <ligand>
        <name>UDP-N-acetyl-alpha-D-glucosamine</name>
        <dbReference type="ChEBI" id="CHEBI:57705"/>
    </ligand>
</feature>
<feature type="binding site" evidence="1">
    <location>
        <position position="108"/>
    </location>
    <ligand>
        <name>Mg(2+)</name>
        <dbReference type="ChEBI" id="CHEBI:18420"/>
    </ligand>
</feature>
<feature type="binding site" evidence="1">
    <location>
        <position position="144"/>
    </location>
    <ligand>
        <name>UDP-N-acetyl-alpha-D-glucosamine</name>
        <dbReference type="ChEBI" id="CHEBI:57705"/>
    </ligand>
</feature>
<feature type="binding site" evidence="1">
    <location>
        <position position="158"/>
    </location>
    <ligand>
        <name>UDP-N-acetyl-alpha-D-glucosamine</name>
        <dbReference type="ChEBI" id="CHEBI:57705"/>
    </ligand>
</feature>
<feature type="binding site" evidence="1">
    <location>
        <position position="173"/>
    </location>
    <ligand>
        <name>UDP-N-acetyl-alpha-D-glucosamine</name>
        <dbReference type="ChEBI" id="CHEBI:57705"/>
    </ligand>
</feature>
<feature type="binding site" evidence="1">
    <location>
        <position position="230"/>
    </location>
    <ligand>
        <name>Mg(2+)</name>
        <dbReference type="ChEBI" id="CHEBI:18420"/>
    </ligand>
</feature>
<feature type="binding site" evidence="1">
    <location>
        <position position="230"/>
    </location>
    <ligand>
        <name>UDP-N-acetyl-alpha-D-glucosamine</name>
        <dbReference type="ChEBI" id="CHEBI:57705"/>
    </ligand>
</feature>
<feature type="binding site" evidence="1">
    <location>
        <position position="319"/>
    </location>
    <ligand>
        <name>UDP-N-acetyl-alpha-D-glucosamine</name>
        <dbReference type="ChEBI" id="CHEBI:57705"/>
    </ligand>
</feature>
<feature type="binding site" evidence="1">
    <location>
        <position position="337"/>
    </location>
    <ligand>
        <name>UDP-N-acetyl-alpha-D-glucosamine</name>
        <dbReference type="ChEBI" id="CHEBI:57705"/>
    </ligand>
</feature>
<feature type="binding site" evidence="1">
    <location>
        <position position="352"/>
    </location>
    <ligand>
        <name>UDP-N-acetyl-alpha-D-glucosamine</name>
        <dbReference type="ChEBI" id="CHEBI:57705"/>
    </ligand>
</feature>
<feature type="binding site" evidence="1">
    <location>
        <position position="363"/>
    </location>
    <ligand>
        <name>UDP-N-acetyl-alpha-D-glucosamine</name>
        <dbReference type="ChEBI" id="CHEBI:57705"/>
    </ligand>
</feature>
<feature type="binding site" evidence="1">
    <location>
        <position position="366"/>
    </location>
    <ligand>
        <name>acetyl-CoA</name>
        <dbReference type="ChEBI" id="CHEBI:57288"/>
    </ligand>
</feature>
<feature type="binding site" evidence="1">
    <location>
        <begin position="372"/>
        <end position="373"/>
    </location>
    <ligand>
        <name>acetyl-CoA</name>
        <dbReference type="ChEBI" id="CHEBI:57288"/>
    </ligand>
</feature>
<feature type="binding site" evidence="1">
    <location>
        <position position="391"/>
    </location>
    <ligand>
        <name>acetyl-CoA</name>
        <dbReference type="ChEBI" id="CHEBI:57288"/>
    </ligand>
</feature>
<feature type="binding site" evidence="1">
    <location>
        <position position="409"/>
    </location>
    <ligand>
        <name>acetyl-CoA</name>
        <dbReference type="ChEBI" id="CHEBI:57288"/>
    </ligand>
</feature>
<feature type="binding site" evidence="1">
    <location>
        <position position="426"/>
    </location>
    <ligand>
        <name>acetyl-CoA</name>
        <dbReference type="ChEBI" id="CHEBI:57288"/>
    </ligand>
</feature>
<proteinExistence type="inferred from homology"/>
<keyword id="KW-0012">Acyltransferase</keyword>
<keyword id="KW-0133">Cell shape</keyword>
<keyword id="KW-0961">Cell wall biogenesis/degradation</keyword>
<keyword id="KW-0963">Cytoplasm</keyword>
<keyword id="KW-0460">Magnesium</keyword>
<keyword id="KW-0479">Metal-binding</keyword>
<keyword id="KW-0511">Multifunctional enzyme</keyword>
<keyword id="KW-0548">Nucleotidyltransferase</keyword>
<keyword id="KW-0573">Peptidoglycan synthesis</keyword>
<keyword id="KW-0677">Repeat</keyword>
<keyword id="KW-0808">Transferase</keyword>
<sequence length="452" mass="47116">MTARNSLTIVLAAGEGTRMRSSLPKVLNPVAGRSLLAHVLSAAPHGERDRLAVVIGPDHRAVGDEAKRVRSDAAIHIQAQRLGTAHAVLAAREAIAEGADDLLIAFGDTPLISAETFARLREPLHDGSSLVVLGFRAADPTGYGRLVVQDGKLTAIREQADASADELKITLCNAGVMAIDGKIALDVLDKIGNANAKGEYYLTDAVGIVRDLGLIASVIETSEDEVRGINTKAQLAEAETVMQTRLRLAAMAAGVTLIAPETVYLAADTTFGKDVVIEPFVVIGPGVSIADGAVIHSFSHLAEAKIGSKAQVGPYARLRPGTSLGDGAKIGNFVETKAAQIDAGAKVNHLTYIGDAHIGASANIGAGTITCNYDGFDKHKTEIGAGAFIGSNSSLVAPVKIGTGAYVGSGSVITKDVPDDALAVERNVQTAKDGWAKRFRDAKSRHRKPKAH</sequence>
<dbReference type="EC" id="2.7.7.23" evidence="1"/>
<dbReference type="EC" id="2.3.1.157" evidence="1"/>
<dbReference type="EMBL" id="CP001096">
    <property type="protein sequence ID" value="ACF01441.1"/>
    <property type="molecule type" value="Genomic_DNA"/>
</dbReference>
<dbReference type="RefSeq" id="WP_012496094.1">
    <property type="nucleotide sequence ID" value="NC_011004.1"/>
</dbReference>
<dbReference type="SMR" id="B3QIT8"/>
<dbReference type="KEGG" id="rpt:Rpal_2933"/>
<dbReference type="HOGENOM" id="CLU_029499_15_2_5"/>
<dbReference type="OrthoDB" id="9775031at2"/>
<dbReference type="UniPathway" id="UPA00113">
    <property type="reaction ID" value="UER00532"/>
</dbReference>
<dbReference type="UniPathway" id="UPA00113">
    <property type="reaction ID" value="UER00533"/>
</dbReference>
<dbReference type="UniPathway" id="UPA00973"/>
<dbReference type="Proteomes" id="UP000001725">
    <property type="component" value="Chromosome"/>
</dbReference>
<dbReference type="GO" id="GO:0005737">
    <property type="term" value="C:cytoplasm"/>
    <property type="evidence" value="ECO:0007669"/>
    <property type="project" value="UniProtKB-SubCell"/>
</dbReference>
<dbReference type="GO" id="GO:0016020">
    <property type="term" value="C:membrane"/>
    <property type="evidence" value="ECO:0007669"/>
    <property type="project" value="GOC"/>
</dbReference>
<dbReference type="GO" id="GO:0019134">
    <property type="term" value="F:glucosamine-1-phosphate N-acetyltransferase activity"/>
    <property type="evidence" value="ECO:0007669"/>
    <property type="project" value="UniProtKB-UniRule"/>
</dbReference>
<dbReference type="GO" id="GO:0000287">
    <property type="term" value="F:magnesium ion binding"/>
    <property type="evidence" value="ECO:0007669"/>
    <property type="project" value="UniProtKB-UniRule"/>
</dbReference>
<dbReference type="GO" id="GO:0003977">
    <property type="term" value="F:UDP-N-acetylglucosamine diphosphorylase activity"/>
    <property type="evidence" value="ECO:0007669"/>
    <property type="project" value="UniProtKB-UniRule"/>
</dbReference>
<dbReference type="GO" id="GO:0000902">
    <property type="term" value="P:cell morphogenesis"/>
    <property type="evidence" value="ECO:0007669"/>
    <property type="project" value="UniProtKB-UniRule"/>
</dbReference>
<dbReference type="GO" id="GO:0071555">
    <property type="term" value="P:cell wall organization"/>
    <property type="evidence" value="ECO:0007669"/>
    <property type="project" value="UniProtKB-KW"/>
</dbReference>
<dbReference type="GO" id="GO:0009245">
    <property type="term" value="P:lipid A biosynthetic process"/>
    <property type="evidence" value="ECO:0007669"/>
    <property type="project" value="UniProtKB-UniRule"/>
</dbReference>
<dbReference type="GO" id="GO:0009252">
    <property type="term" value="P:peptidoglycan biosynthetic process"/>
    <property type="evidence" value="ECO:0007669"/>
    <property type="project" value="UniProtKB-UniRule"/>
</dbReference>
<dbReference type="GO" id="GO:0008360">
    <property type="term" value="P:regulation of cell shape"/>
    <property type="evidence" value="ECO:0007669"/>
    <property type="project" value="UniProtKB-KW"/>
</dbReference>
<dbReference type="GO" id="GO:0006048">
    <property type="term" value="P:UDP-N-acetylglucosamine biosynthetic process"/>
    <property type="evidence" value="ECO:0007669"/>
    <property type="project" value="UniProtKB-UniPathway"/>
</dbReference>
<dbReference type="CDD" id="cd02540">
    <property type="entry name" value="GT2_GlmU_N_bac"/>
    <property type="match status" value="1"/>
</dbReference>
<dbReference type="CDD" id="cd03353">
    <property type="entry name" value="LbH_GlmU_C"/>
    <property type="match status" value="1"/>
</dbReference>
<dbReference type="Gene3D" id="2.160.10.10">
    <property type="entry name" value="Hexapeptide repeat proteins"/>
    <property type="match status" value="1"/>
</dbReference>
<dbReference type="Gene3D" id="3.90.550.10">
    <property type="entry name" value="Spore Coat Polysaccharide Biosynthesis Protein SpsA, Chain A"/>
    <property type="match status" value="1"/>
</dbReference>
<dbReference type="HAMAP" id="MF_01631">
    <property type="entry name" value="GlmU"/>
    <property type="match status" value="1"/>
</dbReference>
<dbReference type="InterPro" id="IPR005882">
    <property type="entry name" value="Bifunctional_GlmU"/>
</dbReference>
<dbReference type="InterPro" id="IPR050065">
    <property type="entry name" value="GlmU-like"/>
</dbReference>
<dbReference type="InterPro" id="IPR038009">
    <property type="entry name" value="GlmU_C_LbH"/>
</dbReference>
<dbReference type="InterPro" id="IPR001451">
    <property type="entry name" value="Hexapep"/>
</dbReference>
<dbReference type="InterPro" id="IPR018357">
    <property type="entry name" value="Hexapep_transf_CS"/>
</dbReference>
<dbReference type="InterPro" id="IPR025877">
    <property type="entry name" value="MobA-like_NTP_Trfase"/>
</dbReference>
<dbReference type="InterPro" id="IPR029044">
    <property type="entry name" value="Nucleotide-diphossugar_trans"/>
</dbReference>
<dbReference type="InterPro" id="IPR011004">
    <property type="entry name" value="Trimer_LpxA-like_sf"/>
</dbReference>
<dbReference type="NCBIfam" id="TIGR01173">
    <property type="entry name" value="glmU"/>
    <property type="match status" value="1"/>
</dbReference>
<dbReference type="NCBIfam" id="NF010933">
    <property type="entry name" value="PRK14353.1"/>
    <property type="match status" value="1"/>
</dbReference>
<dbReference type="PANTHER" id="PTHR43584:SF3">
    <property type="entry name" value="BIFUNCTIONAL PROTEIN GLMU"/>
    <property type="match status" value="1"/>
</dbReference>
<dbReference type="PANTHER" id="PTHR43584">
    <property type="entry name" value="NUCLEOTIDYL TRANSFERASE"/>
    <property type="match status" value="1"/>
</dbReference>
<dbReference type="Pfam" id="PF00132">
    <property type="entry name" value="Hexapep"/>
    <property type="match status" value="3"/>
</dbReference>
<dbReference type="Pfam" id="PF12804">
    <property type="entry name" value="NTP_transf_3"/>
    <property type="match status" value="1"/>
</dbReference>
<dbReference type="SUPFAM" id="SSF53448">
    <property type="entry name" value="Nucleotide-diphospho-sugar transferases"/>
    <property type="match status" value="1"/>
</dbReference>
<dbReference type="SUPFAM" id="SSF51161">
    <property type="entry name" value="Trimeric LpxA-like enzymes"/>
    <property type="match status" value="1"/>
</dbReference>
<dbReference type="PROSITE" id="PS00101">
    <property type="entry name" value="HEXAPEP_TRANSFERASES"/>
    <property type="match status" value="1"/>
</dbReference>
<protein>
    <recommendedName>
        <fullName evidence="1">Bifunctional protein GlmU</fullName>
    </recommendedName>
    <domain>
        <recommendedName>
            <fullName evidence="1">UDP-N-acetylglucosamine pyrophosphorylase</fullName>
            <ecNumber evidence="1">2.7.7.23</ecNumber>
        </recommendedName>
        <alternativeName>
            <fullName evidence="1">N-acetylglucosamine-1-phosphate uridyltransferase</fullName>
        </alternativeName>
    </domain>
    <domain>
        <recommendedName>
            <fullName evidence="1">Glucosamine-1-phosphate N-acetyltransferase</fullName>
            <ecNumber evidence="1">2.3.1.157</ecNumber>
        </recommendedName>
    </domain>
</protein>
<accession>B3QIT8</accession>
<comment type="function">
    <text evidence="1">Catalyzes the last two sequential reactions in the de novo biosynthetic pathway for UDP-N-acetylglucosamine (UDP-GlcNAc). The C-terminal domain catalyzes the transfer of acetyl group from acetyl coenzyme A to glucosamine-1-phosphate (GlcN-1-P) to produce N-acetylglucosamine-1-phosphate (GlcNAc-1-P), which is converted into UDP-GlcNAc by the transfer of uridine 5-monophosphate (from uridine 5-triphosphate), a reaction catalyzed by the N-terminal domain.</text>
</comment>
<comment type="catalytic activity">
    <reaction evidence="1">
        <text>alpha-D-glucosamine 1-phosphate + acetyl-CoA = N-acetyl-alpha-D-glucosamine 1-phosphate + CoA + H(+)</text>
        <dbReference type="Rhea" id="RHEA:13725"/>
        <dbReference type="ChEBI" id="CHEBI:15378"/>
        <dbReference type="ChEBI" id="CHEBI:57287"/>
        <dbReference type="ChEBI" id="CHEBI:57288"/>
        <dbReference type="ChEBI" id="CHEBI:57776"/>
        <dbReference type="ChEBI" id="CHEBI:58516"/>
        <dbReference type="EC" id="2.3.1.157"/>
    </reaction>
</comment>
<comment type="catalytic activity">
    <reaction evidence="1">
        <text>N-acetyl-alpha-D-glucosamine 1-phosphate + UTP + H(+) = UDP-N-acetyl-alpha-D-glucosamine + diphosphate</text>
        <dbReference type="Rhea" id="RHEA:13509"/>
        <dbReference type="ChEBI" id="CHEBI:15378"/>
        <dbReference type="ChEBI" id="CHEBI:33019"/>
        <dbReference type="ChEBI" id="CHEBI:46398"/>
        <dbReference type="ChEBI" id="CHEBI:57705"/>
        <dbReference type="ChEBI" id="CHEBI:57776"/>
        <dbReference type="EC" id="2.7.7.23"/>
    </reaction>
</comment>
<comment type="cofactor">
    <cofactor evidence="1">
        <name>Mg(2+)</name>
        <dbReference type="ChEBI" id="CHEBI:18420"/>
    </cofactor>
    <text evidence="1">Binds 1 Mg(2+) ion per subunit.</text>
</comment>
<comment type="pathway">
    <text evidence="1">Nucleotide-sugar biosynthesis; UDP-N-acetyl-alpha-D-glucosamine biosynthesis; N-acetyl-alpha-D-glucosamine 1-phosphate from alpha-D-glucosamine 6-phosphate (route II): step 2/2.</text>
</comment>
<comment type="pathway">
    <text evidence="1">Nucleotide-sugar biosynthesis; UDP-N-acetyl-alpha-D-glucosamine biosynthesis; UDP-N-acetyl-alpha-D-glucosamine from N-acetyl-alpha-D-glucosamine 1-phosphate: step 1/1.</text>
</comment>
<comment type="pathway">
    <text evidence="1">Bacterial outer membrane biogenesis; LPS lipid A biosynthesis.</text>
</comment>
<comment type="subunit">
    <text evidence="1">Homotrimer.</text>
</comment>
<comment type="subcellular location">
    <subcellularLocation>
        <location evidence="1">Cytoplasm</location>
    </subcellularLocation>
</comment>
<comment type="similarity">
    <text evidence="1">In the N-terminal section; belongs to the N-acetylglucosamine-1-phosphate uridyltransferase family.</text>
</comment>
<comment type="similarity">
    <text evidence="1">In the C-terminal section; belongs to the transferase hexapeptide repeat family.</text>
</comment>
<reference key="1">
    <citation type="submission" date="2008-05" db="EMBL/GenBank/DDBJ databases">
        <title>Complete sequence of Rhodopseudomonas palustris TIE-1.</title>
        <authorList>
            <consortium name="US DOE Joint Genome Institute"/>
            <person name="Lucas S."/>
            <person name="Copeland A."/>
            <person name="Lapidus A."/>
            <person name="Glavina del Rio T."/>
            <person name="Dalin E."/>
            <person name="Tice H."/>
            <person name="Pitluck S."/>
            <person name="Chain P."/>
            <person name="Malfatti S."/>
            <person name="Shin M."/>
            <person name="Vergez L."/>
            <person name="Lang D."/>
            <person name="Schmutz J."/>
            <person name="Larimer F."/>
            <person name="Land M."/>
            <person name="Hauser L."/>
            <person name="Kyrpides N."/>
            <person name="Mikhailova N."/>
            <person name="Emerson D."/>
            <person name="Newman D.K."/>
            <person name="Roden E."/>
            <person name="Richardson P."/>
        </authorList>
    </citation>
    <scope>NUCLEOTIDE SEQUENCE [LARGE SCALE GENOMIC DNA]</scope>
    <source>
        <strain>TIE-1</strain>
    </source>
</reference>
<evidence type="ECO:0000255" key="1">
    <source>
        <dbReference type="HAMAP-Rule" id="MF_01631"/>
    </source>
</evidence>
<name>GLMU_RHOPT</name>
<organism>
    <name type="scientific">Rhodopseudomonas palustris (strain TIE-1)</name>
    <dbReference type="NCBI Taxonomy" id="395960"/>
    <lineage>
        <taxon>Bacteria</taxon>
        <taxon>Pseudomonadati</taxon>
        <taxon>Pseudomonadota</taxon>
        <taxon>Alphaproteobacteria</taxon>
        <taxon>Hyphomicrobiales</taxon>
        <taxon>Nitrobacteraceae</taxon>
        <taxon>Rhodopseudomonas</taxon>
    </lineage>
</organism>